<reference key="1">
    <citation type="journal article" date="2002" name="Proc. Natl. Acad. Sci. U.S.A.">
        <title>The complete genome sequence of Chlorobium tepidum TLS, a photosynthetic, anaerobic, green-sulfur bacterium.</title>
        <authorList>
            <person name="Eisen J.A."/>
            <person name="Nelson K.E."/>
            <person name="Paulsen I.T."/>
            <person name="Heidelberg J.F."/>
            <person name="Wu M."/>
            <person name="Dodson R.J."/>
            <person name="DeBoy R.T."/>
            <person name="Gwinn M.L."/>
            <person name="Nelson W.C."/>
            <person name="Haft D.H."/>
            <person name="Hickey E.K."/>
            <person name="Peterson J.D."/>
            <person name="Durkin A.S."/>
            <person name="Kolonay J.F."/>
            <person name="Yang F."/>
            <person name="Holt I.E."/>
            <person name="Umayam L.A."/>
            <person name="Mason T.M."/>
            <person name="Brenner M."/>
            <person name="Shea T.P."/>
            <person name="Parksey D.S."/>
            <person name="Nierman W.C."/>
            <person name="Feldblyum T.V."/>
            <person name="Hansen C.L."/>
            <person name="Craven M.B."/>
            <person name="Radune D."/>
            <person name="Vamathevan J.J."/>
            <person name="Khouri H.M."/>
            <person name="White O."/>
            <person name="Gruber T.M."/>
            <person name="Ketchum K.A."/>
            <person name="Venter J.C."/>
            <person name="Tettelin H."/>
            <person name="Bryant D.A."/>
            <person name="Fraser C.M."/>
        </authorList>
    </citation>
    <scope>NUCLEOTIDE SEQUENCE [LARGE SCALE GENOMIC DNA]</scope>
    <source>
        <strain>ATCC 49652 / DSM 12025 / NBRC 103806 / TLS</strain>
    </source>
</reference>
<gene>
    <name evidence="1" type="primary">rpoC</name>
    <name type="ordered locus">CT0156</name>
</gene>
<keyword id="KW-0240">DNA-directed RNA polymerase</keyword>
<keyword id="KW-0460">Magnesium</keyword>
<keyword id="KW-0479">Metal-binding</keyword>
<keyword id="KW-0548">Nucleotidyltransferase</keyword>
<keyword id="KW-1185">Reference proteome</keyword>
<keyword id="KW-0804">Transcription</keyword>
<keyword id="KW-0808">Transferase</keyword>
<keyword id="KW-0862">Zinc</keyword>
<proteinExistence type="inferred from homology"/>
<evidence type="ECO:0000255" key="1">
    <source>
        <dbReference type="HAMAP-Rule" id="MF_01322"/>
    </source>
</evidence>
<name>RPOC_CHLTE</name>
<protein>
    <recommendedName>
        <fullName evidence="1">DNA-directed RNA polymerase subunit beta'</fullName>
        <shortName evidence="1">RNAP subunit beta'</shortName>
        <ecNumber evidence="1">2.7.7.6</ecNumber>
    </recommendedName>
    <alternativeName>
        <fullName evidence="1">RNA polymerase subunit beta'</fullName>
    </alternativeName>
    <alternativeName>
        <fullName evidence="1">Transcriptase subunit beta'</fullName>
    </alternativeName>
</protein>
<comment type="function">
    <text evidence="1">DNA-dependent RNA polymerase catalyzes the transcription of DNA into RNA using the four ribonucleoside triphosphates as substrates.</text>
</comment>
<comment type="catalytic activity">
    <reaction evidence="1">
        <text>RNA(n) + a ribonucleoside 5'-triphosphate = RNA(n+1) + diphosphate</text>
        <dbReference type="Rhea" id="RHEA:21248"/>
        <dbReference type="Rhea" id="RHEA-COMP:14527"/>
        <dbReference type="Rhea" id="RHEA-COMP:17342"/>
        <dbReference type="ChEBI" id="CHEBI:33019"/>
        <dbReference type="ChEBI" id="CHEBI:61557"/>
        <dbReference type="ChEBI" id="CHEBI:140395"/>
        <dbReference type="EC" id="2.7.7.6"/>
    </reaction>
</comment>
<comment type="cofactor">
    <cofactor evidence="1">
        <name>Mg(2+)</name>
        <dbReference type="ChEBI" id="CHEBI:18420"/>
    </cofactor>
    <text evidence="1">Binds 1 Mg(2+) ion per subunit.</text>
</comment>
<comment type="cofactor">
    <cofactor evidence="1">
        <name>Zn(2+)</name>
        <dbReference type="ChEBI" id="CHEBI:29105"/>
    </cofactor>
    <text evidence="1">Binds 2 Zn(2+) ions per subunit.</text>
</comment>
<comment type="subunit">
    <text evidence="1">The RNAP catalytic core consists of 2 alpha, 1 beta, 1 beta' and 1 omega subunit. When a sigma factor is associated with the core the holoenzyme is formed, which can initiate transcription.</text>
</comment>
<comment type="similarity">
    <text evidence="1">Belongs to the RNA polymerase beta' chain family.</text>
</comment>
<accession>Q8KG14</accession>
<dbReference type="EC" id="2.7.7.6" evidence="1"/>
<dbReference type="EMBL" id="AE006470">
    <property type="protein sequence ID" value="AAM71404.1"/>
    <property type="molecule type" value="Genomic_DNA"/>
</dbReference>
<dbReference type="RefSeq" id="NP_661062.1">
    <property type="nucleotide sequence ID" value="NC_002932.3"/>
</dbReference>
<dbReference type="RefSeq" id="WP_010931850.1">
    <property type="nucleotide sequence ID" value="NC_002932.3"/>
</dbReference>
<dbReference type="SMR" id="Q8KG14"/>
<dbReference type="STRING" id="194439.CT0156"/>
<dbReference type="EnsemblBacteria" id="AAM71404">
    <property type="protein sequence ID" value="AAM71404"/>
    <property type="gene ID" value="CT0156"/>
</dbReference>
<dbReference type="KEGG" id="cte:CT0156"/>
<dbReference type="PATRIC" id="fig|194439.7.peg.153"/>
<dbReference type="eggNOG" id="COG0086">
    <property type="taxonomic scope" value="Bacteria"/>
</dbReference>
<dbReference type="HOGENOM" id="CLU_000524_3_1_10"/>
<dbReference type="OrthoDB" id="9815296at2"/>
<dbReference type="Proteomes" id="UP000001007">
    <property type="component" value="Chromosome"/>
</dbReference>
<dbReference type="GO" id="GO:0000428">
    <property type="term" value="C:DNA-directed RNA polymerase complex"/>
    <property type="evidence" value="ECO:0007669"/>
    <property type="project" value="UniProtKB-KW"/>
</dbReference>
<dbReference type="GO" id="GO:0003677">
    <property type="term" value="F:DNA binding"/>
    <property type="evidence" value="ECO:0007669"/>
    <property type="project" value="UniProtKB-UniRule"/>
</dbReference>
<dbReference type="GO" id="GO:0003899">
    <property type="term" value="F:DNA-directed RNA polymerase activity"/>
    <property type="evidence" value="ECO:0007669"/>
    <property type="project" value="UniProtKB-UniRule"/>
</dbReference>
<dbReference type="GO" id="GO:0000287">
    <property type="term" value="F:magnesium ion binding"/>
    <property type="evidence" value="ECO:0007669"/>
    <property type="project" value="UniProtKB-UniRule"/>
</dbReference>
<dbReference type="GO" id="GO:0008270">
    <property type="term" value="F:zinc ion binding"/>
    <property type="evidence" value="ECO:0007669"/>
    <property type="project" value="UniProtKB-UniRule"/>
</dbReference>
<dbReference type="GO" id="GO:0006351">
    <property type="term" value="P:DNA-templated transcription"/>
    <property type="evidence" value="ECO:0007669"/>
    <property type="project" value="UniProtKB-UniRule"/>
</dbReference>
<dbReference type="CDD" id="cd02655">
    <property type="entry name" value="RNAP_beta'_C"/>
    <property type="match status" value="1"/>
</dbReference>
<dbReference type="CDD" id="cd01609">
    <property type="entry name" value="RNAP_beta'_N"/>
    <property type="match status" value="1"/>
</dbReference>
<dbReference type="FunFam" id="1.10.150.390:FF:000002">
    <property type="entry name" value="DNA-directed RNA polymerase subunit beta"/>
    <property type="match status" value="1"/>
</dbReference>
<dbReference type="Gene3D" id="1.10.132.30">
    <property type="match status" value="1"/>
</dbReference>
<dbReference type="Gene3D" id="1.10.150.390">
    <property type="match status" value="1"/>
</dbReference>
<dbReference type="Gene3D" id="1.10.1790.20">
    <property type="match status" value="1"/>
</dbReference>
<dbReference type="Gene3D" id="1.10.40.90">
    <property type="match status" value="1"/>
</dbReference>
<dbReference type="Gene3D" id="2.40.40.20">
    <property type="match status" value="1"/>
</dbReference>
<dbReference type="Gene3D" id="2.40.50.100">
    <property type="match status" value="3"/>
</dbReference>
<dbReference type="Gene3D" id="4.10.860.120">
    <property type="entry name" value="RNA polymerase II, clamp domain"/>
    <property type="match status" value="1"/>
</dbReference>
<dbReference type="Gene3D" id="1.10.274.100">
    <property type="entry name" value="RNA polymerase Rpb1, domain 3"/>
    <property type="match status" value="1"/>
</dbReference>
<dbReference type="HAMAP" id="MF_01322">
    <property type="entry name" value="RNApol_bact_RpoC"/>
    <property type="match status" value="1"/>
</dbReference>
<dbReference type="InterPro" id="IPR045867">
    <property type="entry name" value="DNA-dir_RpoC_beta_prime"/>
</dbReference>
<dbReference type="InterPro" id="IPR012754">
    <property type="entry name" value="DNA-dir_RpoC_beta_prime_bact"/>
</dbReference>
<dbReference type="InterPro" id="IPR000722">
    <property type="entry name" value="RNA_pol_asu"/>
</dbReference>
<dbReference type="InterPro" id="IPR006592">
    <property type="entry name" value="RNA_pol_N"/>
</dbReference>
<dbReference type="InterPro" id="IPR007080">
    <property type="entry name" value="RNA_pol_Rpb1_1"/>
</dbReference>
<dbReference type="InterPro" id="IPR007066">
    <property type="entry name" value="RNA_pol_Rpb1_3"/>
</dbReference>
<dbReference type="InterPro" id="IPR042102">
    <property type="entry name" value="RNA_pol_Rpb1_3_sf"/>
</dbReference>
<dbReference type="InterPro" id="IPR007083">
    <property type="entry name" value="RNA_pol_Rpb1_4"/>
</dbReference>
<dbReference type="InterPro" id="IPR007081">
    <property type="entry name" value="RNA_pol_Rpb1_5"/>
</dbReference>
<dbReference type="InterPro" id="IPR044893">
    <property type="entry name" value="RNA_pol_Rpb1_clamp_domain"/>
</dbReference>
<dbReference type="InterPro" id="IPR038120">
    <property type="entry name" value="Rpb1_funnel_sf"/>
</dbReference>
<dbReference type="NCBIfam" id="TIGR02386">
    <property type="entry name" value="rpoC_TIGR"/>
    <property type="match status" value="1"/>
</dbReference>
<dbReference type="PANTHER" id="PTHR19376">
    <property type="entry name" value="DNA-DIRECTED RNA POLYMERASE"/>
    <property type="match status" value="1"/>
</dbReference>
<dbReference type="PANTHER" id="PTHR19376:SF54">
    <property type="entry name" value="DNA-DIRECTED RNA POLYMERASE SUBUNIT BETA"/>
    <property type="match status" value="1"/>
</dbReference>
<dbReference type="Pfam" id="PF04997">
    <property type="entry name" value="RNA_pol_Rpb1_1"/>
    <property type="match status" value="1"/>
</dbReference>
<dbReference type="Pfam" id="PF00623">
    <property type="entry name" value="RNA_pol_Rpb1_2"/>
    <property type="match status" value="1"/>
</dbReference>
<dbReference type="Pfam" id="PF04983">
    <property type="entry name" value="RNA_pol_Rpb1_3"/>
    <property type="match status" value="1"/>
</dbReference>
<dbReference type="Pfam" id="PF05000">
    <property type="entry name" value="RNA_pol_Rpb1_4"/>
    <property type="match status" value="1"/>
</dbReference>
<dbReference type="Pfam" id="PF04998">
    <property type="entry name" value="RNA_pol_Rpb1_5"/>
    <property type="match status" value="1"/>
</dbReference>
<dbReference type="SMART" id="SM00663">
    <property type="entry name" value="RPOLA_N"/>
    <property type="match status" value="1"/>
</dbReference>
<dbReference type="SUPFAM" id="SSF64484">
    <property type="entry name" value="beta and beta-prime subunits of DNA dependent RNA-polymerase"/>
    <property type="match status" value="1"/>
</dbReference>
<sequence length="1490" mass="166282">MIFSQGSSPLKGDFSKIKFSIASPESILAHSRGEVLKPETINYRTFKPERDGLMCEKIFGPTKDWECYCGKYKRVRYKGIICDRCGVEVTTKSVRRERMGHISLAVPVVHTWFFRSVPSKIGALLDLSTKELERIIYYEVYVVINPGEPGEKQGIKKFDRLTEEQYFQIITEYEDNQDLEDNDPAKFVAKMGGEAIHMLLKGLNLDEIALNLRKVLKESGSEQKRADALKRLKVVEAFRKSYEPQKRTRKKSTGLFPEEDSPELYIYEGNKPEYMVMEVVPVIPPELRPLVPLEGGRFATSDLNDLYRRVIIRNNRLKKLIDIRAPEVILRNEKRMLQEAVDALFDNSRKANAVKTGESNRPLKSLSDALKGKQGRFRQNLLGKRVDYSGRSVIVVGPELKLHQCGLPKSMAIELFQPFVIRRLVERGIAKSVKSAKKLIDKKDPVVWDVLEKVIDGHPVLLNRAPTLHRLGIQAFQPTLIEGKAIQLHPLVCTAFNADFDGDQMAVHVPLSPEAQLEASLLMLSSHNLILPQSGKPVTVPSQDMVLGMYYLTKARFGDVGQGQLFYSMEEVIIAYNEERVGLHAQIFVKYDGKVDQVSDPVRLVDTLVPEEQAERRAWLKSQIEQKKLLVTTVGRVIFNQHMPEEIGFINKLINKKVAKELIAQLSSEVGNVETARFLDNIKEVGFDYAMRGGLSIGLSDAIVPETKVKHIKNAQRDSAKIIKEYNRGTLTDNERYNQIVDVWQKTSNLVADESYEKLKKDRDGFNPLYMMLDSGARGSREQVRQLTGMRGLIARPQKSMSGQPGEIIENPIISNLKEGLTVLEYFISTHGARKGLSDTSLKTADAGYLTRRLHDVAQDVIVTIDDCGTTRGLHVERNIEEETSGQIKFREKIKGRVAARDIVDVINDKVVVKAGEIITDELAAAIQDNIGVEEAEIRSVLTCESKVGICAKCYGTNLSVHKLVEIGEAVGVIAAQSIGEPGTQLTLRTFHQGGAAQGGIAETETKAFYEGQVELEDVKSVEHSIITEDGIEETRQIVIQKNGKLNIIDPDSGKVLKRYVVPHGAHLNVEHGQMVRKEQVLFSSEPNSTQIIAEMPGFAKFIDIEKGVTYKEEVDPQTGFAQHTIINWRSKLRASETREPRVAIVSESGEIRKTYPVPIKSNLYVEDGQKIVPGDIIAKVPRNLDRVGGDITAGLPKVTELFEARIPTDPAIVSEIDGYVSFGSQRRSSKEIRVKNDFGEEKVYYVQVGKHVLATEGDEVKAGDPLTDGAVSPQDILRIQGPNAVQQYLVNEIQKVYQINAGVEINDKHLEVIVRQMLQKVRVEEPGDTDLLPGDLIDRSTFIEANEAVAEKVRVIDRGDAPARIIEGQLYKQRDITKLNRELRRNGKSLITIEPALQATSHPVLLGITSAALQTESVISAASFQETTKVLTDAAVAGKVDHLVGLKENVIVGKLIPAGTGLRKYRSIRLRDNEAEEAEAVEAASDEEI</sequence>
<organism>
    <name type="scientific">Chlorobaculum tepidum (strain ATCC 49652 / DSM 12025 / NBRC 103806 / TLS)</name>
    <name type="common">Chlorobium tepidum</name>
    <dbReference type="NCBI Taxonomy" id="194439"/>
    <lineage>
        <taxon>Bacteria</taxon>
        <taxon>Pseudomonadati</taxon>
        <taxon>Chlorobiota</taxon>
        <taxon>Chlorobiia</taxon>
        <taxon>Chlorobiales</taxon>
        <taxon>Chlorobiaceae</taxon>
        <taxon>Chlorobaculum</taxon>
    </lineage>
</organism>
<feature type="chain" id="PRO_0000067729" description="DNA-directed RNA polymerase subunit beta'">
    <location>
        <begin position="1"/>
        <end position="1490"/>
    </location>
</feature>
<feature type="binding site" evidence="1">
    <location>
        <position position="67"/>
    </location>
    <ligand>
        <name>Zn(2+)</name>
        <dbReference type="ChEBI" id="CHEBI:29105"/>
        <label>1</label>
    </ligand>
</feature>
<feature type="binding site" evidence="1">
    <location>
        <position position="69"/>
    </location>
    <ligand>
        <name>Zn(2+)</name>
        <dbReference type="ChEBI" id="CHEBI:29105"/>
        <label>1</label>
    </ligand>
</feature>
<feature type="binding site" evidence="1">
    <location>
        <position position="82"/>
    </location>
    <ligand>
        <name>Zn(2+)</name>
        <dbReference type="ChEBI" id="CHEBI:29105"/>
        <label>1</label>
    </ligand>
</feature>
<feature type="binding site" evidence="1">
    <location>
        <position position="85"/>
    </location>
    <ligand>
        <name>Zn(2+)</name>
        <dbReference type="ChEBI" id="CHEBI:29105"/>
        <label>1</label>
    </ligand>
</feature>
<feature type="binding site" evidence="1">
    <location>
        <position position="499"/>
    </location>
    <ligand>
        <name>Mg(2+)</name>
        <dbReference type="ChEBI" id="CHEBI:18420"/>
    </ligand>
</feature>
<feature type="binding site" evidence="1">
    <location>
        <position position="501"/>
    </location>
    <ligand>
        <name>Mg(2+)</name>
        <dbReference type="ChEBI" id="CHEBI:18420"/>
    </ligand>
</feature>
<feature type="binding site" evidence="1">
    <location>
        <position position="503"/>
    </location>
    <ligand>
        <name>Mg(2+)</name>
        <dbReference type="ChEBI" id="CHEBI:18420"/>
    </ligand>
</feature>
<feature type="binding site" evidence="1">
    <location>
        <position position="868"/>
    </location>
    <ligand>
        <name>Zn(2+)</name>
        <dbReference type="ChEBI" id="CHEBI:29105"/>
        <label>2</label>
    </ligand>
</feature>
<feature type="binding site" evidence="1">
    <location>
        <position position="944"/>
    </location>
    <ligand>
        <name>Zn(2+)</name>
        <dbReference type="ChEBI" id="CHEBI:29105"/>
        <label>2</label>
    </ligand>
</feature>
<feature type="binding site" evidence="1">
    <location>
        <position position="951"/>
    </location>
    <ligand>
        <name>Zn(2+)</name>
        <dbReference type="ChEBI" id="CHEBI:29105"/>
        <label>2</label>
    </ligand>
</feature>
<feature type="binding site" evidence="1">
    <location>
        <position position="954"/>
    </location>
    <ligand>
        <name>Zn(2+)</name>
        <dbReference type="ChEBI" id="CHEBI:29105"/>
        <label>2</label>
    </ligand>
</feature>